<evidence type="ECO:0000255" key="1">
    <source>
        <dbReference type="HAMAP-Rule" id="MF_00075"/>
    </source>
</evidence>
<protein>
    <recommendedName>
        <fullName evidence="1">Translation initiation factor IF-1 1</fullName>
    </recommendedName>
</protein>
<gene>
    <name evidence="1" type="primary">infA1</name>
    <name type="ordered locus">Reut_A2156</name>
</gene>
<feature type="chain" id="PRO_0000263846" description="Translation initiation factor IF-1 1">
    <location>
        <begin position="1"/>
        <end position="73"/>
    </location>
</feature>
<feature type="domain" description="S1-like" evidence="1">
    <location>
        <begin position="1"/>
        <end position="72"/>
    </location>
</feature>
<comment type="function">
    <text evidence="1">One of the essential components for the initiation of protein synthesis. Stabilizes the binding of IF-2 and IF-3 on the 30S subunit to which N-formylmethionyl-tRNA(fMet) subsequently binds. Helps modulate mRNA selection, yielding the 30S pre-initiation complex (PIC). Upon addition of the 50S ribosomal subunit IF-1, IF-2 and IF-3 are released leaving the mature 70S translation initiation complex.</text>
</comment>
<comment type="subunit">
    <text evidence="1">Component of the 30S ribosomal translation pre-initiation complex which assembles on the 30S ribosome in the order IF-2 and IF-3, IF-1 and N-formylmethionyl-tRNA(fMet); mRNA recruitment can occur at any time during PIC assembly.</text>
</comment>
<comment type="subcellular location">
    <subcellularLocation>
        <location evidence="1">Cytoplasm</location>
    </subcellularLocation>
</comment>
<comment type="similarity">
    <text evidence="1">Belongs to the IF-1 family.</text>
</comment>
<reference key="1">
    <citation type="journal article" date="2010" name="PLoS ONE">
        <title>The complete multipartite genome sequence of Cupriavidus necator JMP134, a versatile pollutant degrader.</title>
        <authorList>
            <person name="Lykidis A."/>
            <person name="Perez-Pantoja D."/>
            <person name="Ledger T."/>
            <person name="Mavromatis K."/>
            <person name="Anderson I.J."/>
            <person name="Ivanova N.N."/>
            <person name="Hooper S.D."/>
            <person name="Lapidus A."/>
            <person name="Lucas S."/>
            <person name="Gonzalez B."/>
            <person name="Kyrpides N.C."/>
        </authorList>
    </citation>
    <scope>NUCLEOTIDE SEQUENCE [LARGE SCALE GENOMIC DNA]</scope>
    <source>
        <strain>JMP134 / LMG 1197</strain>
    </source>
</reference>
<organism>
    <name type="scientific">Cupriavidus pinatubonensis (strain JMP 134 / LMG 1197)</name>
    <name type="common">Cupriavidus necator (strain JMP 134)</name>
    <dbReference type="NCBI Taxonomy" id="264198"/>
    <lineage>
        <taxon>Bacteria</taxon>
        <taxon>Pseudomonadati</taxon>
        <taxon>Pseudomonadota</taxon>
        <taxon>Betaproteobacteria</taxon>
        <taxon>Burkholderiales</taxon>
        <taxon>Burkholderiaceae</taxon>
        <taxon>Cupriavidus</taxon>
    </lineage>
</organism>
<dbReference type="EMBL" id="CP000090">
    <property type="protein sequence ID" value="AAZ61520.1"/>
    <property type="molecule type" value="Genomic_DNA"/>
</dbReference>
<dbReference type="SMR" id="Q46ZB3"/>
<dbReference type="STRING" id="264198.Reut_A2156"/>
<dbReference type="KEGG" id="reu:Reut_A2156"/>
<dbReference type="eggNOG" id="COG0361">
    <property type="taxonomic scope" value="Bacteria"/>
</dbReference>
<dbReference type="HOGENOM" id="CLU_151267_1_0_4"/>
<dbReference type="OrthoDB" id="9803250at2"/>
<dbReference type="GO" id="GO:0005829">
    <property type="term" value="C:cytosol"/>
    <property type="evidence" value="ECO:0007669"/>
    <property type="project" value="TreeGrafter"/>
</dbReference>
<dbReference type="GO" id="GO:0043022">
    <property type="term" value="F:ribosome binding"/>
    <property type="evidence" value="ECO:0007669"/>
    <property type="project" value="UniProtKB-UniRule"/>
</dbReference>
<dbReference type="GO" id="GO:0019843">
    <property type="term" value="F:rRNA binding"/>
    <property type="evidence" value="ECO:0007669"/>
    <property type="project" value="UniProtKB-UniRule"/>
</dbReference>
<dbReference type="GO" id="GO:0003743">
    <property type="term" value="F:translation initiation factor activity"/>
    <property type="evidence" value="ECO:0007669"/>
    <property type="project" value="UniProtKB-UniRule"/>
</dbReference>
<dbReference type="CDD" id="cd04451">
    <property type="entry name" value="S1_IF1"/>
    <property type="match status" value="1"/>
</dbReference>
<dbReference type="FunFam" id="2.40.50.140:FF:000002">
    <property type="entry name" value="Translation initiation factor IF-1"/>
    <property type="match status" value="1"/>
</dbReference>
<dbReference type="Gene3D" id="2.40.50.140">
    <property type="entry name" value="Nucleic acid-binding proteins"/>
    <property type="match status" value="1"/>
</dbReference>
<dbReference type="HAMAP" id="MF_00075">
    <property type="entry name" value="IF_1"/>
    <property type="match status" value="1"/>
</dbReference>
<dbReference type="InterPro" id="IPR012340">
    <property type="entry name" value="NA-bd_OB-fold"/>
</dbReference>
<dbReference type="InterPro" id="IPR006196">
    <property type="entry name" value="RNA-binding_domain_S1_IF1"/>
</dbReference>
<dbReference type="InterPro" id="IPR004368">
    <property type="entry name" value="TIF_IF1"/>
</dbReference>
<dbReference type="NCBIfam" id="TIGR00008">
    <property type="entry name" value="infA"/>
    <property type="match status" value="1"/>
</dbReference>
<dbReference type="PANTHER" id="PTHR33370">
    <property type="entry name" value="TRANSLATION INITIATION FACTOR IF-1, CHLOROPLASTIC"/>
    <property type="match status" value="1"/>
</dbReference>
<dbReference type="PANTHER" id="PTHR33370:SF1">
    <property type="entry name" value="TRANSLATION INITIATION FACTOR IF-1, CHLOROPLASTIC"/>
    <property type="match status" value="1"/>
</dbReference>
<dbReference type="Pfam" id="PF01176">
    <property type="entry name" value="eIF-1a"/>
    <property type="match status" value="1"/>
</dbReference>
<dbReference type="SUPFAM" id="SSF50249">
    <property type="entry name" value="Nucleic acid-binding proteins"/>
    <property type="match status" value="1"/>
</dbReference>
<dbReference type="PROSITE" id="PS50832">
    <property type="entry name" value="S1_IF1_TYPE"/>
    <property type="match status" value="1"/>
</dbReference>
<sequence length="73" mass="8406">MAKEELIEFGGVVSEALPDNRYRVLLENGVEIWAYASGKMQKHRIRILAGDRVTLEMSPYDLTKGRINFRHKS</sequence>
<keyword id="KW-0963">Cytoplasm</keyword>
<keyword id="KW-0396">Initiation factor</keyword>
<keyword id="KW-0648">Protein biosynthesis</keyword>
<keyword id="KW-0694">RNA-binding</keyword>
<keyword id="KW-0699">rRNA-binding</keyword>
<name>IF11_CUPPJ</name>
<accession>Q46ZB3</accession>
<proteinExistence type="inferred from homology"/>